<comment type="function">
    <text evidence="1">Catalyzes the addition and repair of the essential 3'-terminal CCA sequence in tRNAs without using a nucleic acid template. Adds these three nucleotides in the order of C, C, and A to the tRNA nucleotide-73, using CTP and ATP as substrates and producing inorganic pyrophosphate. tRNA 3'-terminal CCA addition is required both for tRNA processing and repair. Also involved in tRNA surveillance by mediating tandem CCA addition to generate a CCACCA at the 3' terminus of unstable tRNAs. While stable tRNAs receive only 3'-terminal CCA, unstable tRNAs are marked with CCACCA and rapidly degraded.</text>
</comment>
<comment type="catalytic activity">
    <reaction evidence="1">
        <text>a tRNA precursor + 2 CTP + ATP = a tRNA with a 3' CCA end + 3 diphosphate</text>
        <dbReference type="Rhea" id="RHEA:14433"/>
        <dbReference type="Rhea" id="RHEA-COMP:10465"/>
        <dbReference type="Rhea" id="RHEA-COMP:10468"/>
        <dbReference type="ChEBI" id="CHEBI:30616"/>
        <dbReference type="ChEBI" id="CHEBI:33019"/>
        <dbReference type="ChEBI" id="CHEBI:37563"/>
        <dbReference type="ChEBI" id="CHEBI:74896"/>
        <dbReference type="ChEBI" id="CHEBI:83071"/>
        <dbReference type="EC" id="2.7.7.72"/>
    </reaction>
</comment>
<comment type="catalytic activity">
    <reaction evidence="1">
        <text>a tRNA with a 3' CCA end + 2 CTP + ATP = a tRNA with a 3' CCACCA end + 3 diphosphate</text>
        <dbReference type="Rhea" id="RHEA:76235"/>
        <dbReference type="Rhea" id="RHEA-COMP:10468"/>
        <dbReference type="Rhea" id="RHEA-COMP:18655"/>
        <dbReference type="ChEBI" id="CHEBI:30616"/>
        <dbReference type="ChEBI" id="CHEBI:33019"/>
        <dbReference type="ChEBI" id="CHEBI:37563"/>
        <dbReference type="ChEBI" id="CHEBI:83071"/>
        <dbReference type="ChEBI" id="CHEBI:195187"/>
    </reaction>
    <physiologicalReaction direction="left-to-right" evidence="1">
        <dbReference type="Rhea" id="RHEA:76236"/>
    </physiologicalReaction>
</comment>
<comment type="cofactor">
    <cofactor evidence="1">
        <name>Mg(2+)</name>
        <dbReference type="ChEBI" id="CHEBI:18420"/>
    </cofactor>
</comment>
<comment type="miscellaneous">
    <text evidence="1">A single active site specifically recognizes both ATP and CTP and is responsible for their addition.</text>
</comment>
<comment type="similarity">
    <text evidence="1">Belongs to the tRNA nucleotidyltransferase/poly(A) polymerase family. Bacterial CCA-adding enzyme type 2 subfamily.</text>
</comment>
<evidence type="ECO:0000255" key="1">
    <source>
        <dbReference type="HAMAP-Rule" id="MF_01262"/>
    </source>
</evidence>
<evidence type="ECO:0000255" key="2">
    <source>
        <dbReference type="PROSITE-ProRule" id="PRU01175"/>
    </source>
</evidence>
<keyword id="KW-0067">ATP-binding</keyword>
<keyword id="KW-0460">Magnesium</keyword>
<keyword id="KW-0479">Metal-binding</keyword>
<keyword id="KW-0547">Nucleotide-binding</keyword>
<keyword id="KW-0548">Nucleotidyltransferase</keyword>
<keyword id="KW-1185">Reference proteome</keyword>
<keyword id="KW-0692">RNA repair</keyword>
<keyword id="KW-0694">RNA-binding</keyword>
<keyword id="KW-0808">Transferase</keyword>
<keyword id="KW-0819">tRNA processing</keyword>
<name>CCA_BLOPB</name>
<sequence length="408" mass="47442">MEKYLVGGAVRDALLKLPVQEKDWVVVGSSPQEMLNIGYEQVGKDFPVFLHPESHEEYALARTERKSGQGYTGFICHTAPSITIEEDLYRRDLTINAMAYDSHGNLIDPYHGQRDIKLRLLRHVSHTFHEDPLRVLRVARFAARFAHMNFAIAPETLILMKQMIHELLSLSPERIWTETKKALITDNPQVYFTVLRHCGALKILFPELDALFDIPTPTQYCTKINTGYYTMTTLSKAAYLTDDISVRFSVLCRDLGKGIPLNKINKNTKHHDHRKLGITLIHNLCNRFKIPHEIRNFSKITSEYHDYLYNVKILKPEMLMTLFHVFDCWRRPNRIDQIILVSQSDPIRWKNYNNYSLNQENLLRTAFTVTKKISTVDIIKDGFTGSNISRELYARRLHALNSWKNKQI</sequence>
<dbReference type="EC" id="2.7.7.72" evidence="1"/>
<dbReference type="EMBL" id="CP000016">
    <property type="protein sequence ID" value="AAZ40710.1"/>
    <property type="molecule type" value="Genomic_DNA"/>
</dbReference>
<dbReference type="RefSeq" id="WP_011282616.1">
    <property type="nucleotide sequence ID" value="NC_007292.1"/>
</dbReference>
<dbReference type="SMR" id="Q493X4"/>
<dbReference type="STRING" id="291272.BPEN_064"/>
<dbReference type="KEGG" id="bpn:BPEN_064"/>
<dbReference type="eggNOG" id="COG0617">
    <property type="taxonomic scope" value="Bacteria"/>
</dbReference>
<dbReference type="HOGENOM" id="CLU_015961_1_1_6"/>
<dbReference type="OrthoDB" id="9805698at2"/>
<dbReference type="Proteomes" id="UP000007794">
    <property type="component" value="Chromosome"/>
</dbReference>
<dbReference type="GO" id="GO:0005524">
    <property type="term" value="F:ATP binding"/>
    <property type="evidence" value="ECO:0007669"/>
    <property type="project" value="UniProtKB-UniRule"/>
</dbReference>
<dbReference type="GO" id="GO:0004810">
    <property type="term" value="F:CCA tRNA nucleotidyltransferase activity"/>
    <property type="evidence" value="ECO:0007669"/>
    <property type="project" value="UniProtKB-UniRule"/>
</dbReference>
<dbReference type="GO" id="GO:0000287">
    <property type="term" value="F:magnesium ion binding"/>
    <property type="evidence" value="ECO:0007669"/>
    <property type="project" value="UniProtKB-UniRule"/>
</dbReference>
<dbReference type="GO" id="GO:0000049">
    <property type="term" value="F:tRNA binding"/>
    <property type="evidence" value="ECO:0007669"/>
    <property type="project" value="UniProtKB-UniRule"/>
</dbReference>
<dbReference type="GO" id="GO:0042245">
    <property type="term" value="P:RNA repair"/>
    <property type="evidence" value="ECO:0007669"/>
    <property type="project" value="UniProtKB-KW"/>
</dbReference>
<dbReference type="GO" id="GO:0001680">
    <property type="term" value="P:tRNA 3'-terminal CCA addition"/>
    <property type="evidence" value="ECO:0007669"/>
    <property type="project" value="UniProtKB-UniRule"/>
</dbReference>
<dbReference type="CDD" id="cd05398">
    <property type="entry name" value="NT_ClassII-CCAase"/>
    <property type="match status" value="1"/>
</dbReference>
<dbReference type="Gene3D" id="3.30.460.10">
    <property type="entry name" value="Beta Polymerase, domain 2"/>
    <property type="match status" value="1"/>
</dbReference>
<dbReference type="Gene3D" id="1.10.3090.10">
    <property type="entry name" value="cca-adding enzyme, domain 2"/>
    <property type="match status" value="1"/>
</dbReference>
<dbReference type="HAMAP" id="MF_01262">
    <property type="entry name" value="CCA_bact_type2"/>
    <property type="match status" value="1"/>
</dbReference>
<dbReference type="InterPro" id="IPR012006">
    <property type="entry name" value="CCA_bact"/>
</dbReference>
<dbReference type="InterPro" id="IPR006674">
    <property type="entry name" value="HD_domain"/>
</dbReference>
<dbReference type="InterPro" id="IPR043519">
    <property type="entry name" value="NT_sf"/>
</dbReference>
<dbReference type="InterPro" id="IPR002646">
    <property type="entry name" value="PolA_pol_head_dom"/>
</dbReference>
<dbReference type="InterPro" id="IPR032828">
    <property type="entry name" value="PolyA_RNA-bd"/>
</dbReference>
<dbReference type="InterPro" id="IPR050124">
    <property type="entry name" value="tRNA_CCA-adding_enzyme"/>
</dbReference>
<dbReference type="NCBIfam" id="NF008137">
    <property type="entry name" value="PRK10885.1"/>
    <property type="match status" value="1"/>
</dbReference>
<dbReference type="NCBIfam" id="NF009813">
    <property type="entry name" value="PRK13298.1"/>
    <property type="match status" value="1"/>
</dbReference>
<dbReference type="PANTHER" id="PTHR47545">
    <property type="entry name" value="MULTIFUNCTIONAL CCA PROTEIN"/>
    <property type="match status" value="1"/>
</dbReference>
<dbReference type="PANTHER" id="PTHR47545:SF1">
    <property type="entry name" value="MULTIFUNCTIONAL CCA PROTEIN"/>
    <property type="match status" value="1"/>
</dbReference>
<dbReference type="Pfam" id="PF01743">
    <property type="entry name" value="PolyA_pol"/>
    <property type="match status" value="1"/>
</dbReference>
<dbReference type="Pfam" id="PF12627">
    <property type="entry name" value="PolyA_pol_RNAbd"/>
    <property type="match status" value="1"/>
</dbReference>
<dbReference type="PIRSF" id="PIRSF000813">
    <property type="entry name" value="CCA_bact"/>
    <property type="match status" value="1"/>
</dbReference>
<dbReference type="SUPFAM" id="SSF81301">
    <property type="entry name" value="Nucleotidyltransferase"/>
    <property type="match status" value="1"/>
</dbReference>
<dbReference type="SUPFAM" id="SSF81891">
    <property type="entry name" value="Poly A polymerase C-terminal region-like"/>
    <property type="match status" value="1"/>
</dbReference>
<dbReference type="PROSITE" id="PS51831">
    <property type="entry name" value="HD"/>
    <property type="match status" value="1"/>
</dbReference>
<proteinExistence type="inferred from homology"/>
<accession>Q493X4</accession>
<organism>
    <name type="scientific">Blochmanniella pennsylvanica (strain BPEN)</name>
    <dbReference type="NCBI Taxonomy" id="291272"/>
    <lineage>
        <taxon>Bacteria</taxon>
        <taxon>Pseudomonadati</taxon>
        <taxon>Pseudomonadota</taxon>
        <taxon>Gammaproteobacteria</taxon>
        <taxon>Enterobacterales</taxon>
        <taxon>Enterobacteriaceae</taxon>
        <taxon>ant endosymbionts</taxon>
        <taxon>Candidatus Blochmanniella</taxon>
    </lineage>
</organism>
<gene>
    <name evidence="1" type="primary">cca</name>
    <name type="ordered locus">BPEN_064</name>
</gene>
<reference key="1">
    <citation type="journal article" date="2005" name="Genome Res.">
        <title>Genome sequence of Blochmannia pennsylvanicus indicates parallel evolutionary trends among bacterial mutualists of insects.</title>
        <authorList>
            <person name="Degnan P.H."/>
            <person name="Lazarus A.B."/>
            <person name="Wernegreen J.J."/>
        </authorList>
    </citation>
    <scope>NUCLEOTIDE SEQUENCE [LARGE SCALE GENOMIC DNA]</scope>
    <source>
        <strain>BPEN</strain>
    </source>
</reference>
<feature type="chain" id="PRO_1000054314" description="CCA-adding enzyme">
    <location>
        <begin position="1"/>
        <end position="408"/>
    </location>
</feature>
<feature type="domain" description="HD" evidence="2">
    <location>
        <begin position="226"/>
        <end position="329"/>
    </location>
</feature>
<feature type="binding site" evidence="1">
    <location>
        <position position="8"/>
    </location>
    <ligand>
        <name>ATP</name>
        <dbReference type="ChEBI" id="CHEBI:30616"/>
    </ligand>
</feature>
<feature type="binding site" evidence="1">
    <location>
        <position position="8"/>
    </location>
    <ligand>
        <name>CTP</name>
        <dbReference type="ChEBI" id="CHEBI:37563"/>
    </ligand>
</feature>
<feature type="binding site" evidence="1">
    <location>
        <position position="11"/>
    </location>
    <ligand>
        <name>ATP</name>
        <dbReference type="ChEBI" id="CHEBI:30616"/>
    </ligand>
</feature>
<feature type="binding site" evidence="1">
    <location>
        <position position="11"/>
    </location>
    <ligand>
        <name>CTP</name>
        <dbReference type="ChEBI" id="CHEBI:37563"/>
    </ligand>
</feature>
<feature type="binding site" evidence="1">
    <location>
        <position position="21"/>
    </location>
    <ligand>
        <name>Mg(2+)</name>
        <dbReference type="ChEBI" id="CHEBI:18420"/>
    </ligand>
</feature>
<feature type="binding site" evidence="1">
    <location>
        <position position="23"/>
    </location>
    <ligand>
        <name>Mg(2+)</name>
        <dbReference type="ChEBI" id="CHEBI:18420"/>
    </ligand>
</feature>
<feature type="binding site" evidence="1">
    <location>
        <position position="91"/>
    </location>
    <ligand>
        <name>ATP</name>
        <dbReference type="ChEBI" id="CHEBI:30616"/>
    </ligand>
</feature>
<feature type="binding site" evidence="1">
    <location>
        <position position="91"/>
    </location>
    <ligand>
        <name>CTP</name>
        <dbReference type="ChEBI" id="CHEBI:37563"/>
    </ligand>
</feature>
<feature type="binding site" evidence="1">
    <location>
        <position position="137"/>
    </location>
    <ligand>
        <name>ATP</name>
        <dbReference type="ChEBI" id="CHEBI:30616"/>
    </ligand>
</feature>
<feature type="binding site" evidence="1">
    <location>
        <position position="137"/>
    </location>
    <ligand>
        <name>CTP</name>
        <dbReference type="ChEBI" id="CHEBI:37563"/>
    </ligand>
</feature>
<feature type="binding site" evidence="1">
    <location>
        <position position="140"/>
    </location>
    <ligand>
        <name>ATP</name>
        <dbReference type="ChEBI" id="CHEBI:30616"/>
    </ligand>
</feature>
<feature type="binding site" evidence="1">
    <location>
        <position position="140"/>
    </location>
    <ligand>
        <name>CTP</name>
        <dbReference type="ChEBI" id="CHEBI:37563"/>
    </ligand>
</feature>
<protein>
    <recommendedName>
        <fullName evidence="1">CCA-adding enzyme</fullName>
        <ecNumber evidence="1">2.7.7.72</ecNumber>
    </recommendedName>
    <alternativeName>
        <fullName evidence="1">CCA tRNA nucleotidyltransferase</fullName>
    </alternativeName>
    <alternativeName>
        <fullName evidence="1">tRNA CCA-pyrophosphorylase</fullName>
    </alternativeName>
    <alternativeName>
        <fullName evidence="1">tRNA adenylyl-/cytidylyl- transferase</fullName>
    </alternativeName>
    <alternativeName>
        <fullName evidence="1">tRNA nucleotidyltransferase</fullName>
    </alternativeName>
    <alternativeName>
        <fullName evidence="1">tRNA-NT</fullName>
    </alternativeName>
</protein>